<keyword id="KW-0028">Amino-acid biosynthesis</keyword>
<keyword id="KW-0055">Arginine biosynthesis</keyword>
<keyword id="KW-0963">Cytoplasm</keyword>
<keyword id="KW-1185">Reference proteome</keyword>
<keyword id="KW-0808">Transferase</keyword>
<comment type="function">
    <text evidence="1">Reversibly catalyzes the transfer of the carbamoyl group from carbamoyl phosphate (CP) to the N(epsilon) atom of ornithine (ORN) to produce L-citrulline.</text>
</comment>
<comment type="catalytic activity">
    <reaction>
        <text>carbamoyl phosphate + L-ornithine = L-citrulline + phosphate + H(+)</text>
        <dbReference type="Rhea" id="RHEA:19513"/>
        <dbReference type="ChEBI" id="CHEBI:15378"/>
        <dbReference type="ChEBI" id="CHEBI:43474"/>
        <dbReference type="ChEBI" id="CHEBI:46911"/>
        <dbReference type="ChEBI" id="CHEBI:57743"/>
        <dbReference type="ChEBI" id="CHEBI:58228"/>
        <dbReference type="EC" id="2.1.3.3"/>
    </reaction>
</comment>
<comment type="pathway">
    <text>Amino-acid biosynthesis; L-arginine biosynthesis; L-arginine from L-ornithine and carbamoyl phosphate: step 1/3.</text>
</comment>
<comment type="subcellular location">
    <subcellularLocation>
        <location evidence="1">Cytoplasm</location>
    </subcellularLocation>
</comment>
<comment type="similarity">
    <text evidence="3">Belongs to the aspartate/ornithine carbamoyltransferase superfamily. OTCase family.</text>
</comment>
<organism>
    <name type="scientific">Bacillus cereus (strain ATCC 14579 / DSM 31 / CCUG 7414 / JCM 2152 / NBRC 15305 / NCIMB 9373 / NCTC 2599 / NRRL B-3711)</name>
    <dbReference type="NCBI Taxonomy" id="226900"/>
    <lineage>
        <taxon>Bacteria</taxon>
        <taxon>Bacillati</taxon>
        <taxon>Bacillota</taxon>
        <taxon>Bacilli</taxon>
        <taxon>Bacillales</taxon>
        <taxon>Bacillaceae</taxon>
        <taxon>Bacillus</taxon>
        <taxon>Bacillus cereus group</taxon>
    </lineage>
</organism>
<name>OTC_BACCR</name>
<gene>
    <name type="primary">argF</name>
    <name type="ordered locus">BC_4126</name>
</gene>
<sequence>MSTVQVPKLNTKDLLTLEELTKEEIISLIEFAIYLKKNKQEPLLQGKILGLIFDKHSTRTRVSFEAGMVQLGGHGMFLSGKEMQMGRGETVSDTAKVLSQYIDGIMIRTFSHADVEELAKESSIPVINGLTDDHHPCQALADLMTIYEETNTFKGIKLAYVGDGNNVCHSLLLASAKVGMHMTVATPVGYEPNEEIVKKALAIAKETGAEIEVLHDPELAVNEADFIYTDVWMSMGQEGEEEKYSLFQPYQINNELVKHAKQTYRFLHCLPAHREEEVTGKIIDGPQSIVFEQAGNRLHAQKALLVSLFKNVEEPS</sequence>
<feature type="chain" id="PRO_0000112878" description="Ornithine carbamoyltransferase">
    <location>
        <begin position="1"/>
        <end position="316"/>
    </location>
</feature>
<feature type="binding site" evidence="2">
    <location>
        <begin position="57"/>
        <end position="60"/>
    </location>
    <ligand>
        <name>carbamoyl phosphate</name>
        <dbReference type="ChEBI" id="CHEBI:58228"/>
    </ligand>
</feature>
<feature type="binding site" evidence="2">
    <location>
        <position position="84"/>
    </location>
    <ligand>
        <name>carbamoyl phosphate</name>
        <dbReference type="ChEBI" id="CHEBI:58228"/>
    </ligand>
</feature>
<feature type="binding site" evidence="2">
    <location>
        <position position="108"/>
    </location>
    <ligand>
        <name>carbamoyl phosphate</name>
        <dbReference type="ChEBI" id="CHEBI:58228"/>
    </ligand>
</feature>
<feature type="binding site" evidence="2">
    <location>
        <begin position="135"/>
        <end position="138"/>
    </location>
    <ligand>
        <name>carbamoyl phosphate</name>
        <dbReference type="ChEBI" id="CHEBI:58228"/>
    </ligand>
</feature>
<feature type="binding site" evidence="2">
    <location>
        <position position="166"/>
    </location>
    <ligand>
        <name>L-ornithine</name>
        <dbReference type="ChEBI" id="CHEBI:46911"/>
    </ligand>
</feature>
<feature type="binding site" evidence="2">
    <location>
        <position position="230"/>
    </location>
    <ligand>
        <name>L-ornithine</name>
        <dbReference type="ChEBI" id="CHEBI:46911"/>
    </ligand>
</feature>
<feature type="binding site" evidence="2">
    <location>
        <begin position="234"/>
        <end position="235"/>
    </location>
    <ligand>
        <name>L-ornithine</name>
        <dbReference type="ChEBI" id="CHEBI:46911"/>
    </ligand>
</feature>
<feature type="binding site" evidence="2">
    <location>
        <begin position="269"/>
        <end position="270"/>
    </location>
    <ligand>
        <name>carbamoyl phosphate</name>
        <dbReference type="ChEBI" id="CHEBI:58228"/>
    </ligand>
</feature>
<feature type="binding site" evidence="2">
    <location>
        <position position="297"/>
    </location>
    <ligand>
        <name>carbamoyl phosphate</name>
        <dbReference type="ChEBI" id="CHEBI:58228"/>
    </ligand>
</feature>
<proteinExistence type="inferred from homology"/>
<accession>Q818W3</accession>
<evidence type="ECO:0000250" key="1"/>
<evidence type="ECO:0000255" key="2">
    <source>
        <dbReference type="HAMAP-Rule" id="MF_01109"/>
    </source>
</evidence>
<evidence type="ECO:0000305" key="3"/>
<protein>
    <recommendedName>
        <fullName>Ornithine carbamoyltransferase</fullName>
        <shortName>OTCase</shortName>
        <ecNumber>2.1.3.3</ecNumber>
    </recommendedName>
</protein>
<dbReference type="EC" id="2.1.3.3"/>
<dbReference type="EMBL" id="AE016877">
    <property type="protein sequence ID" value="AAP11044.1"/>
    <property type="molecule type" value="Genomic_DNA"/>
</dbReference>
<dbReference type="RefSeq" id="NP_833843.1">
    <property type="nucleotide sequence ID" value="NC_004722.1"/>
</dbReference>
<dbReference type="RefSeq" id="WP_000108862.1">
    <property type="nucleotide sequence ID" value="NZ_CP138336.1"/>
</dbReference>
<dbReference type="SMR" id="Q818W3"/>
<dbReference type="STRING" id="226900.BC_4126"/>
<dbReference type="GeneID" id="72450812"/>
<dbReference type="KEGG" id="bce:BC4126"/>
<dbReference type="PATRIC" id="fig|226900.8.peg.4264"/>
<dbReference type="HOGENOM" id="CLU_043846_3_2_9"/>
<dbReference type="OrthoDB" id="9802587at2"/>
<dbReference type="UniPathway" id="UPA00068">
    <property type="reaction ID" value="UER00112"/>
</dbReference>
<dbReference type="Proteomes" id="UP000001417">
    <property type="component" value="Chromosome"/>
</dbReference>
<dbReference type="GO" id="GO:0005737">
    <property type="term" value="C:cytoplasm"/>
    <property type="evidence" value="ECO:0007669"/>
    <property type="project" value="UniProtKB-SubCell"/>
</dbReference>
<dbReference type="GO" id="GO:0016597">
    <property type="term" value="F:amino acid binding"/>
    <property type="evidence" value="ECO:0007669"/>
    <property type="project" value="InterPro"/>
</dbReference>
<dbReference type="GO" id="GO:0004585">
    <property type="term" value="F:ornithine carbamoyltransferase activity"/>
    <property type="evidence" value="ECO:0000318"/>
    <property type="project" value="GO_Central"/>
</dbReference>
<dbReference type="GO" id="GO:0042450">
    <property type="term" value="P:arginine biosynthetic process via ornithine"/>
    <property type="evidence" value="ECO:0000318"/>
    <property type="project" value="GO_Central"/>
</dbReference>
<dbReference type="GO" id="GO:0019240">
    <property type="term" value="P:citrulline biosynthetic process"/>
    <property type="evidence" value="ECO:0000318"/>
    <property type="project" value="GO_Central"/>
</dbReference>
<dbReference type="GO" id="GO:0006526">
    <property type="term" value="P:L-arginine biosynthetic process"/>
    <property type="evidence" value="ECO:0007669"/>
    <property type="project" value="UniProtKB-UniRule"/>
</dbReference>
<dbReference type="FunFam" id="3.40.50.1370:FF:000008">
    <property type="entry name" value="Ornithine carbamoyltransferase"/>
    <property type="match status" value="1"/>
</dbReference>
<dbReference type="FunFam" id="3.40.50.1370:FF:000016">
    <property type="entry name" value="Ornithine carbamoyltransferase"/>
    <property type="match status" value="1"/>
</dbReference>
<dbReference type="Gene3D" id="3.40.50.1370">
    <property type="entry name" value="Aspartate/ornithine carbamoyltransferase"/>
    <property type="match status" value="2"/>
</dbReference>
<dbReference type="HAMAP" id="MF_01109">
    <property type="entry name" value="OTCase"/>
    <property type="match status" value="1"/>
</dbReference>
<dbReference type="InterPro" id="IPR006132">
    <property type="entry name" value="Asp/Orn_carbamoyltranf_P-bd"/>
</dbReference>
<dbReference type="InterPro" id="IPR006130">
    <property type="entry name" value="Asp/Orn_carbamoylTrfase"/>
</dbReference>
<dbReference type="InterPro" id="IPR036901">
    <property type="entry name" value="Asp/Orn_carbamoylTrfase_sf"/>
</dbReference>
<dbReference type="InterPro" id="IPR006131">
    <property type="entry name" value="Asp_carbamoyltransf_Asp/Orn-bd"/>
</dbReference>
<dbReference type="InterPro" id="IPR002292">
    <property type="entry name" value="Orn/put_carbamltrans"/>
</dbReference>
<dbReference type="InterPro" id="IPR024904">
    <property type="entry name" value="OTCase_ArgI"/>
</dbReference>
<dbReference type="NCBIfam" id="TIGR00658">
    <property type="entry name" value="orni_carb_tr"/>
    <property type="match status" value="1"/>
</dbReference>
<dbReference type="NCBIfam" id="NF001986">
    <property type="entry name" value="PRK00779.1"/>
    <property type="match status" value="1"/>
</dbReference>
<dbReference type="PANTHER" id="PTHR45753">
    <property type="entry name" value="ORNITHINE CARBAMOYLTRANSFERASE, MITOCHONDRIAL"/>
    <property type="match status" value="1"/>
</dbReference>
<dbReference type="PANTHER" id="PTHR45753:SF3">
    <property type="entry name" value="ORNITHINE TRANSCARBAMYLASE, MITOCHONDRIAL"/>
    <property type="match status" value="1"/>
</dbReference>
<dbReference type="Pfam" id="PF00185">
    <property type="entry name" value="OTCace"/>
    <property type="match status" value="1"/>
</dbReference>
<dbReference type="Pfam" id="PF02729">
    <property type="entry name" value="OTCace_N"/>
    <property type="match status" value="1"/>
</dbReference>
<dbReference type="PRINTS" id="PR00100">
    <property type="entry name" value="AOTCASE"/>
</dbReference>
<dbReference type="PRINTS" id="PR00102">
    <property type="entry name" value="OTCASE"/>
</dbReference>
<dbReference type="SUPFAM" id="SSF53671">
    <property type="entry name" value="Aspartate/ornithine carbamoyltransferase"/>
    <property type="match status" value="1"/>
</dbReference>
<dbReference type="PROSITE" id="PS00097">
    <property type="entry name" value="CARBAMOYLTRANSFERASE"/>
    <property type="match status" value="1"/>
</dbReference>
<reference key="1">
    <citation type="journal article" date="2003" name="Nature">
        <title>Genome sequence of Bacillus cereus and comparative analysis with Bacillus anthracis.</title>
        <authorList>
            <person name="Ivanova N."/>
            <person name="Sorokin A."/>
            <person name="Anderson I."/>
            <person name="Galleron N."/>
            <person name="Candelon B."/>
            <person name="Kapatral V."/>
            <person name="Bhattacharyya A."/>
            <person name="Reznik G."/>
            <person name="Mikhailova N."/>
            <person name="Lapidus A."/>
            <person name="Chu L."/>
            <person name="Mazur M."/>
            <person name="Goltsman E."/>
            <person name="Larsen N."/>
            <person name="D'Souza M."/>
            <person name="Walunas T."/>
            <person name="Grechkin Y."/>
            <person name="Pusch G."/>
            <person name="Haselkorn R."/>
            <person name="Fonstein M."/>
            <person name="Ehrlich S.D."/>
            <person name="Overbeek R."/>
            <person name="Kyrpides N.C."/>
        </authorList>
    </citation>
    <scope>NUCLEOTIDE SEQUENCE [LARGE SCALE GENOMIC DNA]</scope>
    <source>
        <strain>ATCC 14579 / DSM 31 / CCUG 7414 / JCM 2152 / NBRC 15305 / NCIMB 9373 / NCTC 2599 / NRRL B-3711</strain>
    </source>
</reference>